<comment type="function">
    <text>Ferredoxins are iron-sulfur proteins that transfer electrons in a wide variety of metabolic reactions.</text>
</comment>
<comment type="cofactor">
    <cofactor>
        <name>[4Fe-4S] cluster</name>
        <dbReference type="ChEBI" id="CHEBI:49883"/>
    </cofactor>
    <text>Binds 2 [4Fe-4S] clusters.</text>
</comment>
<accession>P00195</accession>
<dbReference type="EMBL" id="M11214">
    <property type="protein sequence ID" value="AAA83524.1"/>
    <property type="molecule type" value="Genomic_DNA"/>
</dbReference>
<dbReference type="PIR" id="A94028">
    <property type="entry name" value="FECLCP"/>
</dbReference>
<dbReference type="RefSeq" id="WP_003440320.1">
    <property type="nucleotide sequence ID" value="NZ_LFYL01000002.1"/>
</dbReference>
<dbReference type="PDB" id="1CLF">
    <property type="method" value="NMR"/>
    <property type="chains" value="A=2-56"/>
</dbReference>
<dbReference type="PDBsum" id="1CLF"/>
<dbReference type="SMR" id="P00195"/>
<dbReference type="GeneID" id="93072380"/>
<dbReference type="OrthoDB" id="9803397at2"/>
<dbReference type="EvolutionaryTrace" id="P00195"/>
<dbReference type="GO" id="GO:0005737">
    <property type="term" value="C:cytoplasm"/>
    <property type="evidence" value="ECO:0007669"/>
    <property type="project" value="TreeGrafter"/>
</dbReference>
<dbReference type="GO" id="GO:0051539">
    <property type="term" value="F:4 iron, 4 sulfur cluster binding"/>
    <property type="evidence" value="ECO:0007669"/>
    <property type="project" value="UniProtKB-KW"/>
</dbReference>
<dbReference type="GO" id="GO:0009055">
    <property type="term" value="F:electron transfer activity"/>
    <property type="evidence" value="ECO:0007669"/>
    <property type="project" value="InterPro"/>
</dbReference>
<dbReference type="GO" id="GO:0046872">
    <property type="term" value="F:metal ion binding"/>
    <property type="evidence" value="ECO:0007669"/>
    <property type="project" value="UniProtKB-KW"/>
</dbReference>
<dbReference type="FunFam" id="3.30.70.20:FF:000045">
    <property type="entry name" value="Ferredoxin, 4Fe-4S"/>
    <property type="match status" value="1"/>
</dbReference>
<dbReference type="Gene3D" id="3.30.70.20">
    <property type="match status" value="1"/>
</dbReference>
<dbReference type="InterPro" id="IPR017896">
    <property type="entry name" value="4Fe4S_Fe-S-bd"/>
</dbReference>
<dbReference type="InterPro" id="IPR017900">
    <property type="entry name" value="4Fe4S_Fe_S_CS"/>
</dbReference>
<dbReference type="InterPro" id="IPR000813">
    <property type="entry name" value="7Fe_ferredoxin"/>
</dbReference>
<dbReference type="InterPro" id="IPR050157">
    <property type="entry name" value="PSI_iron-sulfur_center"/>
</dbReference>
<dbReference type="PANTHER" id="PTHR24960:SF79">
    <property type="entry name" value="PHOTOSYSTEM I IRON-SULFUR CENTER"/>
    <property type="match status" value="1"/>
</dbReference>
<dbReference type="PANTHER" id="PTHR24960">
    <property type="entry name" value="PHOTOSYSTEM I IRON-SULFUR CENTER-RELATED"/>
    <property type="match status" value="1"/>
</dbReference>
<dbReference type="Pfam" id="PF12838">
    <property type="entry name" value="Fer4_7"/>
    <property type="match status" value="1"/>
</dbReference>
<dbReference type="PRINTS" id="PR00354">
    <property type="entry name" value="7FE8SFRDOXIN"/>
</dbReference>
<dbReference type="SUPFAM" id="SSF54862">
    <property type="entry name" value="4Fe-4S ferredoxins"/>
    <property type="match status" value="1"/>
</dbReference>
<dbReference type="PROSITE" id="PS00198">
    <property type="entry name" value="4FE4S_FER_1"/>
    <property type="match status" value="2"/>
</dbReference>
<dbReference type="PROSITE" id="PS51379">
    <property type="entry name" value="4FE4S_FER_2"/>
    <property type="match status" value="2"/>
</dbReference>
<feature type="initiator methionine" description="Removed" evidence="2">
    <location>
        <position position="1"/>
    </location>
</feature>
<feature type="chain" id="PRO_0000159111" description="Ferredoxin">
    <location>
        <begin position="2"/>
        <end position="56"/>
    </location>
</feature>
<feature type="domain" description="4Fe-4S ferredoxin-type 1" evidence="1">
    <location>
        <begin position="2"/>
        <end position="28"/>
    </location>
</feature>
<feature type="domain" description="4Fe-4S ferredoxin-type 2" evidence="1">
    <location>
        <begin position="29"/>
        <end position="56"/>
    </location>
</feature>
<feature type="binding site" evidence="3">
    <location>
        <position position="9"/>
    </location>
    <ligand>
        <name>[4Fe-4S] cluster</name>
        <dbReference type="ChEBI" id="CHEBI:49883"/>
        <label>1</label>
    </ligand>
</feature>
<feature type="binding site">
    <location>
        <position position="12"/>
    </location>
    <ligand>
        <name>[4Fe-4S] cluster</name>
        <dbReference type="ChEBI" id="CHEBI:49883"/>
        <label>1</label>
    </ligand>
</feature>
<feature type="binding site">
    <location>
        <position position="15"/>
    </location>
    <ligand>
        <name>[4Fe-4S] cluster</name>
        <dbReference type="ChEBI" id="CHEBI:49883"/>
        <label>1</label>
    </ligand>
</feature>
<feature type="binding site">
    <location>
        <position position="19"/>
    </location>
    <ligand>
        <name>[4Fe-4S] cluster</name>
        <dbReference type="ChEBI" id="CHEBI:49883"/>
        <label>2</label>
    </ligand>
</feature>
<feature type="binding site">
    <location>
        <position position="38"/>
    </location>
    <ligand>
        <name>[4Fe-4S] cluster</name>
        <dbReference type="ChEBI" id="CHEBI:49883"/>
        <label>2</label>
    </ligand>
</feature>
<feature type="binding site">
    <location>
        <position position="41"/>
    </location>
    <ligand>
        <name>[4Fe-4S] cluster</name>
        <dbReference type="ChEBI" id="CHEBI:49883"/>
        <label>2</label>
    </ligand>
</feature>
<feature type="binding site">
    <location>
        <position position="44"/>
    </location>
    <ligand>
        <name>[4Fe-4S] cluster</name>
        <dbReference type="ChEBI" id="CHEBI:49883"/>
        <label>2</label>
    </ligand>
</feature>
<feature type="binding site">
    <location>
        <position position="48"/>
    </location>
    <ligand>
        <name>[4Fe-4S] cluster</name>
        <dbReference type="ChEBI" id="CHEBI:49883"/>
        <label>1</label>
    </ligand>
</feature>
<feature type="turn" evidence="4">
    <location>
        <begin position="14"/>
        <end position="18"/>
    </location>
</feature>
<feature type="strand" evidence="4">
    <location>
        <begin position="24"/>
        <end position="26"/>
    </location>
</feature>
<feature type="strand" evidence="4">
    <location>
        <begin position="28"/>
        <end position="33"/>
    </location>
</feature>
<feature type="turn" evidence="4">
    <location>
        <begin position="35"/>
        <end position="37"/>
    </location>
</feature>
<feature type="turn" evidence="4">
    <location>
        <begin position="43"/>
        <end position="47"/>
    </location>
</feature>
<reference key="1">
    <citation type="journal article" date="1985" name="Proc. Natl. Acad. Sci. U.S.A.">
        <title>Cloning and nucleotide sequence determination of the Clostridium pasteurianum ferredoxin gene.</title>
        <authorList>
            <person name="Graves M.C."/>
            <person name="Mullenbach G.T."/>
            <person name="Rabinowitz J.C."/>
        </authorList>
    </citation>
    <scope>NUCLEOTIDE SEQUENCE [GENOMIC DNA]</scope>
</reference>
<reference key="2">
    <citation type="journal article" date="1966" name="Biochemistry">
        <title>The amino acid sequence of Clostridium pasteurianum ferredoxin.</title>
        <authorList>
            <person name="Tanaka M."/>
            <person name="Nakashima T."/>
            <person name="Benson A.M."/>
            <person name="Mower H.F."/>
            <person name="Yasunobu K.T."/>
        </authorList>
    </citation>
    <scope>PROTEIN SEQUENCE OF 2-56</scope>
</reference>
<reference key="3">
    <citation type="journal article" date="1995" name="Eur. J. Biochem.">
        <title>Solution structure of the oxidized 2[4Fe-4S] ferredoxin from Clostridium pasteurianum.</title>
        <authorList>
            <person name="Bertini I."/>
            <person name="Donaire A."/>
            <person name="Feinberg B.A."/>
            <person name="Luchinat C."/>
            <person name="Piccioli M."/>
            <person name="Yuan H."/>
        </authorList>
    </citation>
    <scope>STRUCTURE BY NMR</scope>
</reference>
<evidence type="ECO:0000255" key="1">
    <source>
        <dbReference type="PROSITE-ProRule" id="PRU00711"/>
    </source>
</evidence>
<evidence type="ECO:0000269" key="2">
    <source>
    </source>
</evidence>
<evidence type="ECO:0000269" key="3">
    <source>
    </source>
</evidence>
<evidence type="ECO:0007829" key="4">
    <source>
        <dbReference type="PDB" id="1CLF"/>
    </source>
</evidence>
<name>FER_CLOPA</name>
<sequence>MAYKIADSCVSCGACASECPVNAISQGDSIFVIDADTCIDCGNCANVCPVGAPVQE</sequence>
<keyword id="KW-0002">3D-structure</keyword>
<keyword id="KW-0004">4Fe-4S</keyword>
<keyword id="KW-0903">Direct protein sequencing</keyword>
<keyword id="KW-0249">Electron transport</keyword>
<keyword id="KW-0408">Iron</keyword>
<keyword id="KW-0411">Iron-sulfur</keyword>
<keyword id="KW-0479">Metal-binding</keyword>
<keyword id="KW-0677">Repeat</keyword>
<keyword id="KW-0813">Transport</keyword>
<protein>
    <recommendedName>
        <fullName>Ferredoxin</fullName>
    </recommendedName>
</protein>
<organism>
    <name type="scientific">Clostridium pasteurianum</name>
    <dbReference type="NCBI Taxonomy" id="1501"/>
    <lineage>
        <taxon>Bacteria</taxon>
        <taxon>Bacillati</taxon>
        <taxon>Bacillota</taxon>
        <taxon>Clostridia</taxon>
        <taxon>Eubacteriales</taxon>
        <taxon>Clostridiaceae</taxon>
        <taxon>Clostridium</taxon>
    </lineage>
</organism>
<proteinExistence type="evidence at protein level"/>